<sequence length="447" mass="49754">MTTILKHLPAGQRIGIAFSGGLDTSAALLWMRQKGAVPYAYTANLGQPDEDDYDAIPRRAMEYGAENARLIDCRKQLVAEGIAAIQCGAFHNTTGGLTYFNTTPLGRAVTGTMLVAAMKEDGVNIWGDGSTYKGNDIERFYRYGLLTNAELQIYKPWLDTDFIDELGGRHEMSEFMIACGFDYKMSVEKAYSTDSNMLGATHEAKDLEFLNSSVKIVNPIMGVKFWDESVKIPAEVVTVRFEQGHPVALNGKTFSDDVEMMLEANRIGGRHGLGMSDQIENRIIEAKSRGIYEAPGMALLHIAYERLLTGIHNEDTIEQYHSHGRQLGKLLYQGRWFDSQALMLRDGLQRWVASQITGEVTLELRRGNDYSILNTVSDNLTYKAERLTMEKGESVFSPDDRIGQLTMRNLDITDTREKLFGYAKAGLLTASSATGLPQVENLENKGK</sequence>
<comment type="catalytic activity">
    <reaction evidence="1">
        <text>L-citrulline + L-aspartate + ATP = 2-(N(omega)-L-arginino)succinate + AMP + diphosphate + H(+)</text>
        <dbReference type="Rhea" id="RHEA:10932"/>
        <dbReference type="ChEBI" id="CHEBI:15378"/>
        <dbReference type="ChEBI" id="CHEBI:29991"/>
        <dbReference type="ChEBI" id="CHEBI:30616"/>
        <dbReference type="ChEBI" id="CHEBI:33019"/>
        <dbReference type="ChEBI" id="CHEBI:57472"/>
        <dbReference type="ChEBI" id="CHEBI:57743"/>
        <dbReference type="ChEBI" id="CHEBI:456215"/>
        <dbReference type="EC" id="6.3.4.5"/>
    </reaction>
</comment>
<comment type="pathway">
    <text evidence="1">Amino-acid biosynthesis; L-arginine biosynthesis; L-arginine from L-ornithine and carbamoyl phosphate: step 2/3.</text>
</comment>
<comment type="subunit">
    <text evidence="1">Homotetramer.</text>
</comment>
<comment type="subcellular location">
    <subcellularLocation>
        <location evidence="1">Cytoplasm</location>
    </subcellularLocation>
</comment>
<comment type="similarity">
    <text evidence="1">Belongs to the argininosuccinate synthase family. Type 2 subfamily.</text>
</comment>
<gene>
    <name evidence="1" type="primary">argG</name>
    <name type="ordered locus">SeSA_A3480</name>
</gene>
<feature type="chain" id="PRO_1000129768" description="Argininosuccinate synthase">
    <location>
        <begin position="1"/>
        <end position="447"/>
    </location>
</feature>
<feature type="binding site" evidence="1">
    <location>
        <begin position="17"/>
        <end position="25"/>
    </location>
    <ligand>
        <name>ATP</name>
        <dbReference type="ChEBI" id="CHEBI:30616"/>
    </ligand>
</feature>
<feature type="binding site" evidence="1">
    <location>
        <position position="43"/>
    </location>
    <ligand>
        <name>ATP</name>
        <dbReference type="ChEBI" id="CHEBI:30616"/>
    </ligand>
</feature>
<feature type="binding site" evidence="1">
    <location>
        <position position="99"/>
    </location>
    <ligand>
        <name>L-citrulline</name>
        <dbReference type="ChEBI" id="CHEBI:57743"/>
    </ligand>
</feature>
<feature type="binding site" evidence="1">
    <location>
        <position position="129"/>
    </location>
    <ligand>
        <name>ATP</name>
        <dbReference type="ChEBI" id="CHEBI:30616"/>
    </ligand>
</feature>
<feature type="binding site" evidence="1">
    <location>
        <position position="131"/>
    </location>
    <ligand>
        <name>ATP</name>
        <dbReference type="ChEBI" id="CHEBI:30616"/>
    </ligand>
</feature>
<feature type="binding site" evidence="1">
    <location>
        <position position="131"/>
    </location>
    <ligand>
        <name>L-aspartate</name>
        <dbReference type="ChEBI" id="CHEBI:29991"/>
    </ligand>
</feature>
<feature type="binding site" evidence="1">
    <location>
        <position position="135"/>
    </location>
    <ligand>
        <name>L-aspartate</name>
        <dbReference type="ChEBI" id="CHEBI:29991"/>
    </ligand>
</feature>
<feature type="binding site" evidence="1">
    <location>
        <position position="135"/>
    </location>
    <ligand>
        <name>L-citrulline</name>
        <dbReference type="ChEBI" id="CHEBI:57743"/>
    </ligand>
</feature>
<feature type="binding site" evidence="1">
    <location>
        <position position="136"/>
    </location>
    <ligand>
        <name>ATP</name>
        <dbReference type="ChEBI" id="CHEBI:30616"/>
    </ligand>
</feature>
<feature type="binding site" evidence="1">
    <location>
        <position position="136"/>
    </location>
    <ligand>
        <name>L-aspartate</name>
        <dbReference type="ChEBI" id="CHEBI:29991"/>
    </ligand>
</feature>
<feature type="binding site" evidence="1">
    <location>
        <position position="139"/>
    </location>
    <ligand>
        <name>L-citrulline</name>
        <dbReference type="ChEBI" id="CHEBI:57743"/>
    </ligand>
</feature>
<feature type="binding site" evidence="1">
    <location>
        <position position="192"/>
    </location>
    <ligand>
        <name>L-citrulline</name>
        <dbReference type="ChEBI" id="CHEBI:57743"/>
    </ligand>
</feature>
<feature type="binding site" evidence="1">
    <location>
        <position position="194"/>
    </location>
    <ligand>
        <name>ATP</name>
        <dbReference type="ChEBI" id="CHEBI:30616"/>
    </ligand>
</feature>
<feature type="binding site" evidence="1">
    <location>
        <position position="201"/>
    </location>
    <ligand>
        <name>L-citrulline</name>
        <dbReference type="ChEBI" id="CHEBI:57743"/>
    </ligand>
</feature>
<feature type="binding site" evidence="1">
    <location>
        <position position="203"/>
    </location>
    <ligand>
        <name>L-citrulline</name>
        <dbReference type="ChEBI" id="CHEBI:57743"/>
    </ligand>
</feature>
<feature type="binding site" evidence="1">
    <location>
        <position position="280"/>
    </location>
    <ligand>
        <name>L-citrulline</name>
        <dbReference type="ChEBI" id="CHEBI:57743"/>
    </ligand>
</feature>
<proteinExistence type="inferred from homology"/>
<protein>
    <recommendedName>
        <fullName evidence="1">Argininosuccinate synthase</fullName>
        <ecNumber evidence="1">6.3.4.5</ecNumber>
    </recommendedName>
    <alternativeName>
        <fullName evidence="1">Citrulline--aspartate ligase</fullName>
    </alternativeName>
</protein>
<accession>B4TWE1</accession>
<organism>
    <name type="scientific">Salmonella schwarzengrund (strain CVM19633)</name>
    <dbReference type="NCBI Taxonomy" id="439843"/>
    <lineage>
        <taxon>Bacteria</taxon>
        <taxon>Pseudomonadati</taxon>
        <taxon>Pseudomonadota</taxon>
        <taxon>Gammaproteobacteria</taxon>
        <taxon>Enterobacterales</taxon>
        <taxon>Enterobacteriaceae</taxon>
        <taxon>Salmonella</taxon>
    </lineage>
</organism>
<name>ASSY_SALSV</name>
<keyword id="KW-0028">Amino-acid biosynthesis</keyword>
<keyword id="KW-0055">Arginine biosynthesis</keyword>
<keyword id="KW-0067">ATP-binding</keyword>
<keyword id="KW-0963">Cytoplasm</keyword>
<keyword id="KW-0436">Ligase</keyword>
<keyword id="KW-0547">Nucleotide-binding</keyword>
<reference key="1">
    <citation type="journal article" date="2011" name="J. Bacteriol.">
        <title>Comparative genomics of 28 Salmonella enterica isolates: evidence for CRISPR-mediated adaptive sublineage evolution.</title>
        <authorList>
            <person name="Fricke W.F."/>
            <person name="Mammel M.K."/>
            <person name="McDermott P.F."/>
            <person name="Tartera C."/>
            <person name="White D.G."/>
            <person name="Leclerc J.E."/>
            <person name="Ravel J."/>
            <person name="Cebula T.A."/>
        </authorList>
    </citation>
    <scope>NUCLEOTIDE SEQUENCE [LARGE SCALE GENOMIC DNA]</scope>
    <source>
        <strain>CVM19633</strain>
    </source>
</reference>
<evidence type="ECO:0000255" key="1">
    <source>
        <dbReference type="HAMAP-Rule" id="MF_00581"/>
    </source>
</evidence>
<dbReference type="EC" id="6.3.4.5" evidence="1"/>
<dbReference type="EMBL" id="CP001127">
    <property type="protein sequence ID" value="ACF92368.1"/>
    <property type="molecule type" value="Genomic_DNA"/>
</dbReference>
<dbReference type="RefSeq" id="WP_000207654.1">
    <property type="nucleotide sequence ID" value="NC_011094.1"/>
</dbReference>
<dbReference type="SMR" id="B4TWE1"/>
<dbReference type="KEGG" id="sew:SeSA_A3480"/>
<dbReference type="HOGENOM" id="CLU_032784_4_1_6"/>
<dbReference type="UniPathway" id="UPA00068">
    <property type="reaction ID" value="UER00113"/>
</dbReference>
<dbReference type="Proteomes" id="UP000001865">
    <property type="component" value="Chromosome"/>
</dbReference>
<dbReference type="GO" id="GO:0005737">
    <property type="term" value="C:cytoplasm"/>
    <property type="evidence" value="ECO:0007669"/>
    <property type="project" value="UniProtKB-SubCell"/>
</dbReference>
<dbReference type="GO" id="GO:0004055">
    <property type="term" value="F:argininosuccinate synthase activity"/>
    <property type="evidence" value="ECO:0007669"/>
    <property type="project" value="UniProtKB-UniRule"/>
</dbReference>
<dbReference type="GO" id="GO:0005524">
    <property type="term" value="F:ATP binding"/>
    <property type="evidence" value="ECO:0007669"/>
    <property type="project" value="UniProtKB-UniRule"/>
</dbReference>
<dbReference type="GO" id="GO:0042803">
    <property type="term" value="F:protein homodimerization activity"/>
    <property type="evidence" value="ECO:0007669"/>
    <property type="project" value="InterPro"/>
</dbReference>
<dbReference type="GO" id="GO:0000053">
    <property type="term" value="P:argininosuccinate metabolic process"/>
    <property type="evidence" value="ECO:0007669"/>
    <property type="project" value="TreeGrafter"/>
</dbReference>
<dbReference type="GO" id="GO:0006526">
    <property type="term" value="P:L-arginine biosynthetic process"/>
    <property type="evidence" value="ECO:0007669"/>
    <property type="project" value="UniProtKB-UniRule"/>
</dbReference>
<dbReference type="GO" id="GO:0000050">
    <property type="term" value="P:urea cycle"/>
    <property type="evidence" value="ECO:0007669"/>
    <property type="project" value="TreeGrafter"/>
</dbReference>
<dbReference type="CDD" id="cd01999">
    <property type="entry name" value="ASS"/>
    <property type="match status" value="1"/>
</dbReference>
<dbReference type="FunFam" id="1.10.287.400:FF:000001">
    <property type="entry name" value="Argininosuccinate synthase"/>
    <property type="match status" value="1"/>
</dbReference>
<dbReference type="Gene3D" id="1.10.287.400">
    <property type="match status" value="1"/>
</dbReference>
<dbReference type="Gene3D" id="3.90.1260.10">
    <property type="entry name" value="Argininosuccinate synthetase, chain A, domain 2"/>
    <property type="match status" value="1"/>
</dbReference>
<dbReference type="Gene3D" id="3.40.50.620">
    <property type="entry name" value="HUPs"/>
    <property type="match status" value="1"/>
</dbReference>
<dbReference type="HAMAP" id="MF_00581">
    <property type="entry name" value="Arg_succ_synth_type2"/>
    <property type="match status" value="1"/>
</dbReference>
<dbReference type="InterPro" id="IPR023437">
    <property type="entry name" value="Arg_succ_synth_type2_subfam"/>
</dbReference>
<dbReference type="InterPro" id="IPR048268">
    <property type="entry name" value="Arginosuc_syn_C"/>
</dbReference>
<dbReference type="InterPro" id="IPR048267">
    <property type="entry name" value="Arginosuc_syn_N"/>
</dbReference>
<dbReference type="InterPro" id="IPR001518">
    <property type="entry name" value="Arginosuc_synth"/>
</dbReference>
<dbReference type="InterPro" id="IPR018223">
    <property type="entry name" value="Arginosuc_synth_CS"/>
</dbReference>
<dbReference type="InterPro" id="IPR023434">
    <property type="entry name" value="Arginosuc_synth_type_1_subfam"/>
</dbReference>
<dbReference type="InterPro" id="IPR024074">
    <property type="entry name" value="AS_cat/multimer_dom_body"/>
</dbReference>
<dbReference type="InterPro" id="IPR024073">
    <property type="entry name" value="AS_multimer_C_tail"/>
</dbReference>
<dbReference type="InterPro" id="IPR014729">
    <property type="entry name" value="Rossmann-like_a/b/a_fold"/>
</dbReference>
<dbReference type="NCBIfam" id="TIGR00032">
    <property type="entry name" value="argG"/>
    <property type="match status" value="1"/>
</dbReference>
<dbReference type="NCBIfam" id="NF003779">
    <property type="entry name" value="PRK05370.1"/>
    <property type="match status" value="1"/>
</dbReference>
<dbReference type="PANTHER" id="PTHR11587">
    <property type="entry name" value="ARGININOSUCCINATE SYNTHASE"/>
    <property type="match status" value="1"/>
</dbReference>
<dbReference type="PANTHER" id="PTHR11587:SF2">
    <property type="entry name" value="ARGININOSUCCINATE SYNTHASE"/>
    <property type="match status" value="1"/>
</dbReference>
<dbReference type="Pfam" id="PF20979">
    <property type="entry name" value="Arginosuc_syn_C"/>
    <property type="match status" value="1"/>
</dbReference>
<dbReference type="Pfam" id="PF00764">
    <property type="entry name" value="Arginosuc_synth"/>
    <property type="match status" value="1"/>
</dbReference>
<dbReference type="SUPFAM" id="SSF52402">
    <property type="entry name" value="Adenine nucleotide alpha hydrolases-like"/>
    <property type="match status" value="1"/>
</dbReference>
<dbReference type="SUPFAM" id="SSF69864">
    <property type="entry name" value="Argininosuccinate synthetase, C-terminal domain"/>
    <property type="match status" value="1"/>
</dbReference>
<dbReference type="PROSITE" id="PS00564">
    <property type="entry name" value="ARGININOSUCCIN_SYN_1"/>
    <property type="match status" value="1"/>
</dbReference>
<dbReference type="PROSITE" id="PS00565">
    <property type="entry name" value="ARGININOSUCCIN_SYN_2"/>
    <property type="match status" value="1"/>
</dbReference>